<accession>Q325G3</accession>
<organism>
    <name type="scientific">Shigella boydii serotype 4 (strain Sb227)</name>
    <dbReference type="NCBI Taxonomy" id="300268"/>
    <lineage>
        <taxon>Bacteria</taxon>
        <taxon>Pseudomonadati</taxon>
        <taxon>Pseudomonadota</taxon>
        <taxon>Gammaproteobacteria</taxon>
        <taxon>Enterobacterales</taxon>
        <taxon>Enterobacteriaceae</taxon>
        <taxon>Shigella</taxon>
    </lineage>
</organism>
<feature type="chain" id="PRO_1000024660" description="ATP-dependent Clp protease ATP-binding subunit ClpX">
    <location>
        <begin position="1"/>
        <end position="424"/>
    </location>
</feature>
<feature type="domain" description="ClpX-type ZB" evidence="2">
    <location>
        <begin position="2"/>
        <end position="56"/>
    </location>
</feature>
<feature type="binding site" evidence="2">
    <location>
        <position position="15"/>
    </location>
    <ligand>
        <name>Zn(2+)</name>
        <dbReference type="ChEBI" id="CHEBI:29105"/>
    </ligand>
</feature>
<feature type="binding site" evidence="2">
    <location>
        <position position="18"/>
    </location>
    <ligand>
        <name>Zn(2+)</name>
        <dbReference type="ChEBI" id="CHEBI:29105"/>
    </ligand>
</feature>
<feature type="binding site" evidence="2">
    <location>
        <position position="37"/>
    </location>
    <ligand>
        <name>Zn(2+)</name>
        <dbReference type="ChEBI" id="CHEBI:29105"/>
    </ligand>
</feature>
<feature type="binding site" evidence="2">
    <location>
        <position position="40"/>
    </location>
    <ligand>
        <name>Zn(2+)</name>
        <dbReference type="ChEBI" id="CHEBI:29105"/>
    </ligand>
</feature>
<feature type="binding site" evidence="1">
    <location>
        <begin position="120"/>
        <end position="127"/>
    </location>
    <ligand>
        <name>ATP</name>
        <dbReference type="ChEBI" id="CHEBI:30616"/>
    </ligand>
</feature>
<evidence type="ECO:0000255" key="1">
    <source>
        <dbReference type="HAMAP-Rule" id="MF_00175"/>
    </source>
</evidence>
<evidence type="ECO:0000255" key="2">
    <source>
        <dbReference type="PROSITE-ProRule" id="PRU01250"/>
    </source>
</evidence>
<sequence length="424" mass="46314">MTDKRKDGSGKLLYCSFCGKSQHEVRKLIAGPSVYICDECVDLCNDIIREEIKEVAPHRERSALPTPHEIRNHLDDYVIGQEQAKKVLAVAVYNHYKRLRNGDTSNGVELGKSNILLIGPTGSGKTLLAETLARLLDVPFTMADATTLTEAGYVGEDVENIIQKLLQKCDYDVQKAQRGIVYIDEIDKISRKSDNPSITRDVSGEGVQQALLKLIEGTVAAVPPQGGRKHPQQEFLQVDTSKILFICGGAFAGLDKVISHRVETGSGIGFGATVKAKSDKASEGELLAQVEPEDLIKFGLIPEFIGRLPVVATLNELSEEALIQILKEPKNALTKQYQALFNLEGVDLEFRDEALDAIAKKAMARKTGARGLRSIVEAALLDTMYDLPSMEDVEKGVIDESVIDGQSKPLLIYGKPEAQQASGE</sequence>
<name>CLPX_SHIBS</name>
<keyword id="KW-0067">ATP-binding</keyword>
<keyword id="KW-0143">Chaperone</keyword>
<keyword id="KW-0479">Metal-binding</keyword>
<keyword id="KW-0547">Nucleotide-binding</keyword>
<keyword id="KW-0862">Zinc</keyword>
<proteinExistence type="inferred from homology"/>
<protein>
    <recommendedName>
        <fullName evidence="1">ATP-dependent Clp protease ATP-binding subunit ClpX</fullName>
    </recommendedName>
</protein>
<reference key="1">
    <citation type="journal article" date="2005" name="Nucleic Acids Res.">
        <title>Genome dynamics and diversity of Shigella species, the etiologic agents of bacillary dysentery.</title>
        <authorList>
            <person name="Yang F."/>
            <person name="Yang J."/>
            <person name="Zhang X."/>
            <person name="Chen L."/>
            <person name="Jiang Y."/>
            <person name="Yan Y."/>
            <person name="Tang X."/>
            <person name="Wang J."/>
            <person name="Xiong Z."/>
            <person name="Dong J."/>
            <person name="Xue Y."/>
            <person name="Zhu Y."/>
            <person name="Xu X."/>
            <person name="Sun L."/>
            <person name="Chen S."/>
            <person name="Nie H."/>
            <person name="Peng J."/>
            <person name="Xu J."/>
            <person name="Wang Y."/>
            <person name="Yuan Z."/>
            <person name="Wen Y."/>
            <person name="Yao Z."/>
            <person name="Shen Y."/>
            <person name="Qiang B."/>
            <person name="Hou Y."/>
            <person name="Yu J."/>
            <person name="Jin Q."/>
        </authorList>
    </citation>
    <scope>NUCLEOTIDE SEQUENCE [LARGE SCALE GENOMIC DNA]</scope>
    <source>
        <strain>Sb227</strain>
    </source>
</reference>
<gene>
    <name evidence="1" type="primary">clpX</name>
    <name type="ordered locus">SBO_0332</name>
</gene>
<comment type="function">
    <text evidence="1">ATP-dependent specificity component of the Clp protease. It directs the protease to specific substrates. Can perform chaperone functions in the absence of ClpP.</text>
</comment>
<comment type="subunit">
    <text evidence="1">Component of the ClpX-ClpP complex. Forms a hexameric ring that, in the presence of ATP, binds to fourteen ClpP subunits assembled into a disk-like structure with a central cavity, resembling the structure of eukaryotic proteasomes.</text>
</comment>
<comment type="similarity">
    <text evidence="1">Belongs to the ClpX chaperone family.</text>
</comment>
<dbReference type="EMBL" id="CP000036">
    <property type="protein sequence ID" value="ABB65045.1"/>
    <property type="molecule type" value="Genomic_DNA"/>
</dbReference>
<dbReference type="RefSeq" id="WP_000130303.1">
    <property type="nucleotide sequence ID" value="NC_007613.1"/>
</dbReference>
<dbReference type="SMR" id="Q325G3"/>
<dbReference type="KEGG" id="sbo:SBO_0332"/>
<dbReference type="HOGENOM" id="CLU_014218_8_2_6"/>
<dbReference type="Proteomes" id="UP000007067">
    <property type="component" value="Chromosome"/>
</dbReference>
<dbReference type="GO" id="GO:0009376">
    <property type="term" value="C:HslUV protease complex"/>
    <property type="evidence" value="ECO:0007669"/>
    <property type="project" value="TreeGrafter"/>
</dbReference>
<dbReference type="GO" id="GO:0005524">
    <property type="term" value="F:ATP binding"/>
    <property type="evidence" value="ECO:0007669"/>
    <property type="project" value="UniProtKB-UniRule"/>
</dbReference>
<dbReference type="GO" id="GO:0016887">
    <property type="term" value="F:ATP hydrolysis activity"/>
    <property type="evidence" value="ECO:0007669"/>
    <property type="project" value="InterPro"/>
</dbReference>
<dbReference type="GO" id="GO:0140662">
    <property type="term" value="F:ATP-dependent protein folding chaperone"/>
    <property type="evidence" value="ECO:0007669"/>
    <property type="project" value="InterPro"/>
</dbReference>
<dbReference type="GO" id="GO:0046983">
    <property type="term" value="F:protein dimerization activity"/>
    <property type="evidence" value="ECO:0007669"/>
    <property type="project" value="InterPro"/>
</dbReference>
<dbReference type="GO" id="GO:0051082">
    <property type="term" value="F:unfolded protein binding"/>
    <property type="evidence" value="ECO:0007669"/>
    <property type="project" value="UniProtKB-UniRule"/>
</dbReference>
<dbReference type="GO" id="GO:0008270">
    <property type="term" value="F:zinc ion binding"/>
    <property type="evidence" value="ECO:0007669"/>
    <property type="project" value="InterPro"/>
</dbReference>
<dbReference type="GO" id="GO:0051301">
    <property type="term" value="P:cell division"/>
    <property type="evidence" value="ECO:0007669"/>
    <property type="project" value="TreeGrafter"/>
</dbReference>
<dbReference type="GO" id="GO:0051603">
    <property type="term" value="P:proteolysis involved in protein catabolic process"/>
    <property type="evidence" value="ECO:0007669"/>
    <property type="project" value="TreeGrafter"/>
</dbReference>
<dbReference type="CDD" id="cd19497">
    <property type="entry name" value="RecA-like_ClpX"/>
    <property type="match status" value="1"/>
</dbReference>
<dbReference type="FunFam" id="1.10.8.60:FF:000002">
    <property type="entry name" value="ATP-dependent Clp protease ATP-binding subunit ClpX"/>
    <property type="match status" value="1"/>
</dbReference>
<dbReference type="FunFam" id="3.40.50.300:FF:000005">
    <property type="entry name" value="ATP-dependent Clp protease ATP-binding subunit ClpX"/>
    <property type="match status" value="1"/>
</dbReference>
<dbReference type="Gene3D" id="1.10.8.60">
    <property type="match status" value="1"/>
</dbReference>
<dbReference type="Gene3D" id="6.20.220.10">
    <property type="entry name" value="ClpX chaperone, C4-type zinc finger domain"/>
    <property type="match status" value="1"/>
</dbReference>
<dbReference type="Gene3D" id="3.40.50.300">
    <property type="entry name" value="P-loop containing nucleotide triphosphate hydrolases"/>
    <property type="match status" value="1"/>
</dbReference>
<dbReference type="HAMAP" id="MF_00175">
    <property type="entry name" value="ClpX"/>
    <property type="match status" value="1"/>
</dbReference>
<dbReference type="InterPro" id="IPR003593">
    <property type="entry name" value="AAA+_ATPase"/>
</dbReference>
<dbReference type="InterPro" id="IPR050052">
    <property type="entry name" value="ATP-dep_Clp_protease_ClpX"/>
</dbReference>
<dbReference type="InterPro" id="IPR003959">
    <property type="entry name" value="ATPase_AAA_core"/>
</dbReference>
<dbReference type="InterPro" id="IPR019489">
    <property type="entry name" value="Clp_ATPase_C"/>
</dbReference>
<dbReference type="InterPro" id="IPR004487">
    <property type="entry name" value="Clp_protease_ATP-bd_su_ClpX"/>
</dbReference>
<dbReference type="InterPro" id="IPR046425">
    <property type="entry name" value="ClpX_bact"/>
</dbReference>
<dbReference type="InterPro" id="IPR027417">
    <property type="entry name" value="P-loop_NTPase"/>
</dbReference>
<dbReference type="InterPro" id="IPR010603">
    <property type="entry name" value="Znf_CppX_C4"/>
</dbReference>
<dbReference type="InterPro" id="IPR038366">
    <property type="entry name" value="Znf_CppX_C4_sf"/>
</dbReference>
<dbReference type="NCBIfam" id="TIGR00382">
    <property type="entry name" value="clpX"/>
    <property type="match status" value="1"/>
</dbReference>
<dbReference type="NCBIfam" id="NF003745">
    <property type="entry name" value="PRK05342.1"/>
    <property type="match status" value="1"/>
</dbReference>
<dbReference type="PANTHER" id="PTHR48102:SF7">
    <property type="entry name" value="ATP-DEPENDENT CLP PROTEASE ATP-BINDING SUBUNIT CLPX-LIKE, MITOCHONDRIAL"/>
    <property type="match status" value="1"/>
</dbReference>
<dbReference type="PANTHER" id="PTHR48102">
    <property type="entry name" value="ATP-DEPENDENT CLP PROTEASE ATP-BINDING SUBUNIT CLPX-LIKE, MITOCHONDRIAL-RELATED"/>
    <property type="match status" value="1"/>
</dbReference>
<dbReference type="Pfam" id="PF07724">
    <property type="entry name" value="AAA_2"/>
    <property type="match status" value="1"/>
</dbReference>
<dbReference type="Pfam" id="PF10431">
    <property type="entry name" value="ClpB_D2-small"/>
    <property type="match status" value="1"/>
</dbReference>
<dbReference type="Pfam" id="PF06689">
    <property type="entry name" value="zf-C4_ClpX"/>
    <property type="match status" value="1"/>
</dbReference>
<dbReference type="SMART" id="SM00382">
    <property type="entry name" value="AAA"/>
    <property type="match status" value="1"/>
</dbReference>
<dbReference type="SMART" id="SM01086">
    <property type="entry name" value="ClpB_D2-small"/>
    <property type="match status" value="1"/>
</dbReference>
<dbReference type="SMART" id="SM00994">
    <property type="entry name" value="zf-C4_ClpX"/>
    <property type="match status" value="1"/>
</dbReference>
<dbReference type="SUPFAM" id="SSF57716">
    <property type="entry name" value="Glucocorticoid receptor-like (DNA-binding domain)"/>
    <property type="match status" value="1"/>
</dbReference>
<dbReference type="SUPFAM" id="SSF52540">
    <property type="entry name" value="P-loop containing nucleoside triphosphate hydrolases"/>
    <property type="match status" value="1"/>
</dbReference>
<dbReference type="PROSITE" id="PS51902">
    <property type="entry name" value="CLPX_ZB"/>
    <property type="match status" value="1"/>
</dbReference>